<feature type="chain" id="PRO_1000023455" description="3-dehydroquinate dehydratase">
    <location>
        <begin position="1"/>
        <end position="152"/>
    </location>
</feature>
<feature type="active site" description="Proton acceptor" evidence="1">
    <location>
        <position position="26"/>
    </location>
</feature>
<feature type="active site" description="Proton donor" evidence="1">
    <location>
        <position position="104"/>
    </location>
</feature>
<feature type="binding site" evidence="1">
    <location>
        <position position="78"/>
    </location>
    <ligand>
        <name>substrate</name>
    </ligand>
</feature>
<feature type="binding site" evidence="1">
    <location>
        <position position="84"/>
    </location>
    <ligand>
        <name>substrate</name>
    </ligand>
</feature>
<feature type="binding site" evidence="1">
    <location>
        <position position="91"/>
    </location>
    <ligand>
        <name>substrate</name>
    </ligand>
</feature>
<feature type="binding site" evidence="1">
    <location>
        <begin position="105"/>
        <end position="106"/>
    </location>
    <ligand>
        <name>substrate</name>
    </ligand>
</feature>
<feature type="binding site" evidence="1">
    <location>
        <position position="115"/>
    </location>
    <ligand>
        <name>substrate</name>
    </ligand>
</feature>
<feature type="site" description="Transition state stabilizer" evidence="1">
    <location>
        <position position="21"/>
    </location>
</feature>
<proteinExistence type="inferred from homology"/>
<protein>
    <recommendedName>
        <fullName evidence="1">3-dehydroquinate dehydratase</fullName>
        <shortName evidence="1">3-dehydroquinase</shortName>
        <ecNumber evidence="1">4.2.1.10</ecNumber>
    </recommendedName>
    <alternativeName>
        <fullName evidence="1">Type II DHQase</fullName>
    </alternativeName>
</protein>
<keyword id="KW-0028">Amino-acid biosynthesis</keyword>
<keyword id="KW-0057">Aromatic amino acid biosynthesis</keyword>
<keyword id="KW-0456">Lyase</keyword>
<keyword id="KW-1185">Reference proteome</keyword>
<comment type="function">
    <text evidence="1">Catalyzes a trans-dehydration via an enolate intermediate.</text>
</comment>
<comment type="catalytic activity">
    <reaction evidence="1">
        <text>3-dehydroquinate = 3-dehydroshikimate + H2O</text>
        <dbReference type="Rhea" id="RHEA:21096"/>
        <dbReference type="ChEBI" id="CHEBI:15377"/>
        <dbReference type="ChEBI" id="CHEBI:16630"/>
        <dbReference type="ChEBI" id="CHEBI:32364"/>
        <dbReference type="EC" id="4.2.1.10"/>
    </reaction>
</comment>
<comment type="pathway">
    <text evidence="1">Metabolic intermediate biosynthesis; chorismate biosynthesis; chorismate from D-erythrose 4-phosphate and phosphoenolpyruvate: step 3/7.</text>
</comment>
<comment type="subunit">
    <text evidence="1">Homododecamer.</text>
</comment>
<comment type="similarity">
    <text evidence="1">Belongs to the type-II 3-dehydroquinase family.</text>
</comment>
<gene>
    <name evidence="1" type="primary">aroQ</name>
    <name type="ordered locus">BCc_251</name>
</gene>
<evidence type="ECO:0000255" key="1">
    <source>
        <dbReference type="HAMAP-Rule" id="MF_00169"/>
    </source>
</evidence>
<sequence>MKKKINILLINGPNLNLLGTREPEIYGKKTLEQIVNKIKKKSILLNVTLYDFQSNAEHKIVEKIHNCKKNNIQFILINPGAFTHTSISIRDALSAINIPFFEIHISNIFARENFRSHSWMSDIAQGVISGFGNYGYQIALKTAVKFLLEKEK</sequence>
<reference key="1">
    <citation type="journal article" date="2006" name="Science">
        <title>A small microbial genome: the end of a long symbiotic relationship?</title>
        <authorList>
            <person name="Perez-Brocal V."/>
            <person name="Gil R."/>
            <person name="Ramos S."/>
            <person name="Lamelas A."/>
            <person name="Postigo M."/>
            <person name="Michelena J.M."/>
            <person name="Silva F.J."/>
            <person name="Moya A."/>
            <person name="Latorre A."/>
        </authorList>
    </citation>
    <scope>NUCLEOTIDE SEQUENCE [LARGE SCALE GENOMIC DNA]</scope>
    <source>
        <strain>Cc</strain>
    </source>
</reference>
<accession>Q057I1</accession>
<organism>
    <name type="scientific">Buchnera aphidicola subsp. Cinara cedri (strain Cc)</name>
    <dbReference type="NCBI Taxonomy" id="372461"/>
    <lineage>
        <taxon>Bacteria</taxon>
        <taxon>Pseudomonadati</taxon>
        <taxon>Pseudomonadota</taxon>
        <taxon>Gammaproteobacteria</taxon>
        <taxon>Enterobacterales</taxon>
        <taxon>Erwiniaceae</taxon>
        <taxon>Buchnera</taxon>
    </lineage>
</organism>
<dbReference type="EC" id="4.2.1.10" evidence="1"/>
<dbReference type="EMBL" id="CP000263">
    <property type="protein sequence ID" value="ABJ90718.1"/>
    <property type="molecule type" value="Genomic_DNA"/>
</dbReference>
<dbReference type="RefSeq" id="WP_011672637.1">
    <property type="nucleotide sequence ID" value="NC_008513.1"/>
</dbReference>
<dbReference type="SMR" id="Q057I1"/>
<dbReference type="STRING" id="372461.BCc_251"/>
<dbReference type="KEGG" id="bcc:BCc_251"/>
<dbReference type="eggNOG" id="COG0757">
    <property type="taxonomic scope" value="Bacteria"/>
</dbReference>
<dbReference type="HOGENOM" id="CLU_090968_3_0_6"/>
<dbReference type="OrthoDB" id="9790793at2"/>
<dbReference type="UniPathway" id="UPA00053">
    <property type="reaction ID" value="UER00086"/>
</dbReference>
<dbReference type="Proteomes" id="UP000000669">
    <property type="component" value="Chromosome"/>
</dbReference>
<dbReference type="GO" id="GO:0003855">
    <property type="term" value="F:3-dehydroquinate dehydratase activity"/>
    <property type="evidence" value="ECO:0007669"/>
    <property type="project" value="UniProtKB-UniRule"/>
</dbReference>
<dbReference type="GO" id="GO:0008652">
    <property type="term" value="P:amino acid biosynthetic process"/>
    <property type="evidence" value="ECO:0007669"/>
    <property type="project" value="UniProtKB-KW"/>
</dbReference>
<dbReference type="GO" id="GO:0009073">
    <property type="term" value="P:aromatic amino acid family biosynthetic process"/>
    <property type="evidence" value="ECO:0007669"/>
    <property type="project" value="UniProtKB-KW"/>
</dbReference>
<dbReference type="GO" id="GO:0009423">
    <property type="term" value="P:chorismate biosynthetic process"/>
    <property type="evidence" value="ECO:0007669"/>
    <property type="project" value="UniProtKB-UniRule"/>
</dbReference>
<dbReference type="GO" id="GO:0019631">
    <property type="term" value="P:quinate catabolic process"/>
    <property type="evidence" value="ECO:0007669"/>
    <property type="project" value="TreeGrafter"/>
</dbReference>
<dbReference type="CDD" id="cd00466">
    <property type="entry name" value="DHQase_II"/>
    <property type="match status" value="1"/>
</dbReference>
<dbReference type="Gene3D" id="3.40.50.9100">
    <property type="entry name" value="Dehydroquinase, class II"/>
    <property type="match status" value="1"/>
</dbReference>
<dbReference type="HAMAP" id="MF_00169">
    <property type="entry name" value="AroQ"/>
    <property type="match status" value="1"/>
</dbReference>
<dbReference type="InterPro" id="IPR001874">
    <property type="entry name" value="DHquinase_II"/>
</dbReference>
<dbReference type="InterPro" id="IPR018509">
    <property type="entry name" value="DHquinase_II_CS"/>
</dbReference>
<dbReference type="InterPro" id="IPR036441">
    <property type="entry name" value="DHquinase_II_sf"/>
</dbReference>
<dbReference type="NCBIfam" id="TIGR01088">
    <property type="entry name" value="aroQ"/>
    <property type="match status" value="1"/>
</dbReference>
<dbReference type="NCBIfam" id="NF003804">
    <property type="entry name" value="PRK05395.1-1"/>
    <property type="match status" value="1"/>
</dbReference>
<dbReference type="NCBIfam" id="NF003805">
    <property type="entry name" value="PRK05395.1-2"/>
    <property type="match status" value="1"/>
</dbReference>
<dbReference type="NCBIfam" id="NF003806">
    <property type="entry name" value="PRK05395.1-3"/>
    <property type="match status" value="1"/>
</dbReference>
<dbReference type="NCBIfam" id="NF003807">
    <property type="entry name" value="PRK05395.1-4"/>
    <property type="match status" value="1"/>
</dbReference>
<dbReference type="PANTHER" id="PTHR21272">
    <property type="entry name" value="CATABOLIC 3-DEHYDROQUINASE"/>
    <property type="match status" value="1"/>
</dbReference>
<dbReference type="PANTHER" id="PTHR21272:SF3">
    <property type="entry name" value="CATABOLIC 3-DEHYDROQUINASE"/>
    <property type="match status" value="1"/>
</dbReference>
<dbReference type="Pfam" id="PF01220">
    <property type="entry name" value="DHquinase_II"/>
    <property type="match status" value="1"/>
</dbReference>
<dbReference type="PIRSF" id="PIRSF001399">
    <property type="entry name" value="DHquinase_II"/>
    <property type="match status" value="1"/>
</dbReference>
<dbReference type="SUPFAM" id="SSF52304">
    <property type="entry name" value="Type II 3-dehydroquinate dehydratase"/>
    <property type="match status" value="1"/>
</dbReference>
<dbReference type="PROSITE" id="PS01029">
    <property type="entry name" value="DEHYDROQUINASE_II"/>
    <property type="match status" value="1"/>
</dbReference>
<name>AROQ_BUCCC</name>